<sequence>AFLTLTPGSHVDSYVEA</sequence>
<proteinExistence type="evidence at protein level"/>
<dbReference type="GO" id="GO:0005576">
    <property type="term" value="C:extracellular region"/>
    <property type="evidence" value="ECO:0007669"/>
    <property type="project" value="InterPro"/>
</dbReference>
<dbReference type="GO" id="GO:0005184">
    <property type="term" value="F:neuropeptide hormone activity"/>
    <property type="evidence" value="ECO:0007669"/>
    <property type="project" value="InterPro"/>
</dbReference>
<dbReference type="GO" id="GO:0007218">
    <property type="term" value="P:neuropeptide signaling pathway"/>
    <property type="evidence" value="ECO:0007669"/>
    <property type="project" value="UniProtKB-KW"/>
</dbReference>
<dbReference type="InterPro" id="IPR012593">
    <property type="entry name" value="Pea-VEAacid"/>
</dbReference>
<dbReference type="Pfam" id="PF08111">
    <property type="entry name" value="Pea-VEAacid"/>
    <property type="match status" value="1"/>
</dbReference>
<evidence type="ECO:0000269" key="1">
    <source>
    </source>
</evidence>
<keyword id="KW-0903">Direct protein sequencing</keyword>
<keyword id="KW-0527">Neuropeptide</keyword>
<protein>
    <recommendedName>
        <fullName>Peptide hormone 3</fullName>
    </recommendedName>
    <alternativeName>
        <fullName>Pea-VEAacid 1</fullName>
    </alternativeName>
</protein>
<name>PH3_PERAM</name>
<reference key="1">
    <citation type="journal article" date="1999" name="Ann. N. Y. Acad. Sci.">
        <title>The unique neuropeptide pattern in abdominal perisympathetic organs of insects.</title>
        <authorList>
            <person name="Predel R."/>
            <person name="Eckert M."/>
            <person name="Holman G.M."/>
        </authorList>
    </citation>
    <scope>PROTEIN SEQUENCE</scope>
    <scope>MASS SPECTROMETRY</scope>
    <source>
        <tissue>Abdominal perisympathetic organs</tissue>
    </source>
</reference>
<accession>P82696</accession>
<comment type="mass spectrometry"/>
<feature type="peptide" id="PRO_0000044204" description="Peptide hormone 3">
    <location>
        <begin position="1"/>
        <end position="17"/>
    </location>
</feature>
<organism>
    <name type="scientific">Periplaneta americana</name>
    <name type="common">American cockroach</name>
    <name type="synonym">Blatta americana</name>
    <dbReference type="NCBI Taxonomy" id="6978"/>
    <lineage>
        <taxon>Eukaryota</taxon>
        <taxon>Metazoa</taxon>
        <taxon>Ecdysozoa</taxon>
        <taxon>Arthropoda</taxon>
        <taxon>Hexapoda</taxon>
        <taxon>Insecta</taxon>
        <taxon>Pterygota</taxon>
        <taxon>Neoptera</taxon>
        <taxon>Polyneoptera</taxon>
        <taxon>Dictyoptera</taxon>
        <taxon>Blattodea</taxon>
        <taxon>Blattoidea</taxon>
        <taxon>Blattidae</taxon>
        <taxon>Blattinae</taxon>
        <taxon>Periplaneta</taxon>
    </lineage>
</organism>